<proteinExistence type="inferred from homology"/>
<gene>
    <name evidence="1" type="primary">rplS</name>
    <name type="ordered locus">LCA_0719</name>
</gene>
<protein>
    <recommendedName>
        <fullName evidence="1">Large ribosomal subunit protein bL19</fullName>
    </recommendedName>
    <alternativeName>
        <fullName evidence="2">50S ribosomal protein L19</fullName>
    </alternativeName>
</protein>
<accession>Q38XQ6</accession>
<keyword id="KW-1185">Reference proteome</keyword>
<keyword id="KW-0687">Ribonucleoprotein</keyword>
<keyword id="KW-0689">Ribosomal protein</keyword>
<name>RL19_LATSS</name>
<comment type="function">
    <text evidence="1">This protein is located at the 30S-50S ribosomal subunit interface and may play a role in the structure and function of the aminoacyl-tRNA binding site.</text>
</comment>
<comment type="similarity">
    <text evidence="1">Belongs to the bacterial ribosomal protein bL19 family.</text>
</comment>
<evidence type="ECO:0000255" key="1">
    <source>
        <dbReference type="HAMAP-Rule" id="MF_00402"/>
    </source>
</evidence>
<evidence type="ECO:0000305" key="2"/>
<organism>
    <name type="scientific">Latilactobacillus sakei subsp. sakei (strain 23K)</name>
    <name type="common">Lactobacillus sakei subsp. sakei</name>
    <dbReference type="NCBI Taxonomy" id="314315"/>
    <lineage>
        <taxon>Bacteria</taxon>
        <taxon>Bacillati</taxon>
        <taxon>Bacillota</taxon>
        <taxon>Bacilli</taxon>
        <taxon>Lactobacillales</taxon>
        <taxon>Lactobacillaceae</taxon>
        <taxon>Latilactobacillus</taxon>
    </lineage>
</organism>
<reference key="1">
    <citation type="journal article" date="2005" name="Nat. Biotechnol.">
        <title>The complete genome sequence of the meat-borne lactic acid bacterium Lactobacillus sakei 23K.</title>
        <authorList>
            <person name="Chaillou S."/>
            <person name="Champomier-Verges M.-C."/>
            <person name="Cornet M."/>
            <person name="Crutz-Le Coq A.-M."/>
            <person name="Dudez A.-M."/>
            <person name="Martin V."/>
            <person name="Beaufils S."/>
            <person name="Darbon-Rongere E."/>
            <person name="Bossy R."/>
            <person name="Loux V."/>
            <person name="Zagorec M."/>
        </authorList>
    </citation>
    <scope>NUCLEOTIDE SEQUENCE [LARGE SCALE GENOMIC DNA]</scope>
    <source>
        <strain>23K</strain>
    </source>
</reference>
<sequence length="115" mass="13168">MNPLIQEITKSQLRSDIPSFRPGDSVRVHVRVVEGTRERIQLFEGVVIKRHGVGVSETYTVRKISSGVGVERTFPLHSPRVAKLEVTRHGRVRRAKLYYLRALRGKAARIKEARR</sequence>
<dbReference type="EMBL" id="CR936503">
    <property type="protein sequence ID" value="CAI55023.1"/>
    <property type="molecule type" value="Genomic_DNA"/>
</dbReference>
<dbReference type="RefSeq" id="WP_011374427.1">
    <property type="nucleotide sequence ID" value="NC_007576.1"/>
</dbReference>
<dbReference type="SMR" id="Q38XQ6"/>
<dbReference type="STRING" id="314315.LCA_0719"/>
<dbReference type="GeneID" id="57133581"/>
<dbReference type="KEGG" id="lsa:LCA_0719"/>
<dbReference type="eggNOG" id="COG0335">
    <property type="taxonomic scope" value="Bacteria"/>
</dbReference>
<dbReference type="HOGENOM" id="CLU_103507_2_2_9"/>
<dbReference type="OrthoDB" id="9803541at2"/>
<dbReference type="Proteomes" id="UP000002707">
    <property type="component" value="Chromosome"/>
</dbReference>
<dbReference type="GO" id="GO:0022625">
    <property type="term" value="C:cytosolic large ribosomal subunit"/>
    <property type="evidence" value="ECO:0007669"/>
    <property type="project" value="TreeGrafter"/>
</dbReference>
<dbReference type="GO" id="GO:0003735">
    <property type="term" value="F:structural constituent of ribosome"/>
    <property type="evidence" value="ECO:0007669"/>
    <property type="project" value="InterPro"/>
</dbReference>
<dbReference type="GO" id="GO:0006412">
    <property type="term" value="P:translation"/>
    <property type="evidence" value="ECO:0007669"/>
    <property type="project" value="UniProtKB-UniRule"/>
</dbReference>
<dbReference type="FunFam" id="2.30.30.790:FF:000001">
    <property type="entry name" value="50S ribosomal protein L19"/>
    <property type="match status" value="1"/>
</dbReference>
<dbReference type="Gene3D" id="2.30.30.790">
    <property type="match status" value="1"/>
</dbReference>
<dbReference type="HAMAP" id="MF_00402">
    <property type="entry name" value="Ribosomal_bL19"/>
    <property type="match status" value="1"/>
</dbReference>
<dbReference type="InterPro" id="IPR001857">
    <property type="entry name" value="Ribosomal_bL19"/>
</dbReference>
<dbReference type="InterPro" id="IPR018257">
    <property type="entry name" value="Ribosomal_bL19_CS"/>
</dbReference>
<dbReference type="InterPro" id="IPR038657">
    <property type="entry name" value="Ribosomal_bL19_sf"/>
</dbReference>
<dbReference type="InterPro" id="IPR008991">
    <property type="entry name" value="Translation_prot_SH3-like_sf"/>
</dbReference>
<dbReference type="NCBIfam" id="TIGR01024">
    <property type="entry name" value="rplS_bact"/>
    <property type="match status" value="1"/>
</dbReference>
<dbReference type="PANTHER" id="PTHR15680:SF9">
    <property type="entry name" value="LARGE RIBOSOMAL SUBUNIT PROTEIN BL19M"/>
    <property type="match status" value="1"/>
</dbReference>
<dbReference type="PANTHER" id="PTHR15680">
    <property type="entry name" value="RIBOSOMAL PROTEIN L19"/>
    <property type="match status" value="1"/>
</dbReference>
<dbReference type="Pfam" id="PF01245">
    <property type="entry name" value="Ribosomal_L19"/>
    <property type="match status" value="1"/>
</dbReference>
<dbReference type="PIRSF" id="PIRSF002191">
    <property type="entry name" value="Ribosomal_L19"/>
    <property type="match status" value="1"/>
</dbReference>
<dbReference type="PRINTS" id="PR00061">
    <property type="entry name" value="RIBOSOMALL19"/>
</dbReference>
<dbReference type="SUPFAM" id="SSF50104">
    <property type="entry name" value="Translation proteins SH3-like domain"/>
    <property type="match status" value="1"/>
</dbReference>
<dbReference type="PROSITE" id="PS01015">
    <property type="entry name" value="RIBOSOMAL_L19"/>
    <property type="match status" value="1"/>
</dbReference>
<feature type="chain" id="PRO_0000226852" description="Large ribosomal subunit protein bL19">
    <location>
        <begin position="1"/>
        <end position="115"/>
    </location>
</feature>